<sequence length="340" mass="36674">MSVFSQLAESSKQNPFSLPVRSGNCASAVSAPGQVEFGSGKYYAYCALGGVLSCGITHTAIVPLDLVKCRIQVNPEKYTGIATGFRTTIAEEGARALVKGWAPTLLGYSAQGLGKFGFYEIFKNVYADMLGEENAYLYRTSLYLAASASAEFFADILLAPMEATKVRIQTSPGAPPTLRGCAPMIYKAEGLTGFYKGLPPLWMRQIPYTMMKFACFEKTVEALYQYVVPKPRAECSKAEQLVVTFVAGYIAGVFCAIVSHPADTVVSKLNQDSQATAGGILKKLGFAGVWKGLVPRIIMIGTLTALQWFIYDSVKVALNLPRPPPPEMPASLKAKLAAQQ</sequence>
<name>MPCP_CAEEL</name>
<protein>
    <recommendedName>
        <fullName>Phosphate carrier protein, mitochondrial</fullName>
        <shortName>PTP</shortName>
    </recommendedName>
</protein>
<gene>
    <name type="ORF">F01G4.6</name>
</gene>
<organism>
    <name type="scientific">Caenorhabditis elegans</name>
    <dbReference type="NCBI Taxonomy" id="6239"/>
    <lineage>
        <taxon>Eukaryota</taxon>
        <taxon>Metazoa</taxon>
        <taxon>Ecdysozoa</taxon>
        <taxon>Nematoda</taxon>
        <taxon>Chromadorea</taxon>
        <taxon>Rhabditida</taxon>
        <taxon>Rhabditina</taxon>
        <taxon>Rhabditomorpha</taxon>
        <taxon>Rhabditoidea</taxon>
        <taxon>Rhabditidae</taxon>
        <taxon>Peloderinae</taxon>
        <taxon>Caenorhabditis</taxon>
    </lineage>
</organism>
<accession>P40614</accession>
<reference key="1">
    <citation type="journal article" date="1994" name="DNA Seq.">
        <title>Extension of the mitochondrial transporter super-family: sequences of five members from the nematode worm, Caenorhabditis elegans.</title>
        <authorList>
            <person name="Runswick M.J."/>
            <person name="Philippides A."/>
            <person name="Lauria G."/>
            <person name="Walker J.E."/>
        </authorList>
    </citation>
    <scope>NUCLEOTIDE SEQUENCE [MRNA]</scope>
</reference>
<reference key="2">
    <citation type="journal article" date="1998" name="Science">
        <title>Genome sequence of the nematode C. elegans: a platform for investigating biology.</title>
        <authorList>
            <consortium name="The C. elegans sequencing consortium"/>
        </authorList>
    </citation>
    <scope>NUCLEOTIDE SEQUENCE [LARGE SCALE GENOMIC DNA]</scope>
    <source>
        <strain>Bristol N2</strain>
    </source>
</reference>
<proteinExistence type="evidence at transcript level"/>
<feature type="transit peptide" description="Mitochondrion" evidence="2">
    <location>
        <begin position="1"/>
        <end position="27"/>
    </location>
</feature>
<feature type="chain" id="PRO_0000019259" description="Phosphate carrier protein, mitochondrial">
    <location>
        <begin position="28"/>
        <end position="340"/>
    </location>
</feature>
<feature type="transmembrane region" description="Helical; Name=1" evidence="2">
    <location>
        <begin position="47"/>
        <end position="67"/>
    </location>
</feature>
<feature type="transmembrane region" description="Helical; Name=2" evidence="2">
    <location>
        <begin position="95"/>
        <end position="114"/>
    </location>
</feature>
<feature type="transmembrane region" description="Helical; Name=3" evidence="2">
    <location>
        <begin position="141"/>
        <end position="161"/>
    </location>
</feature>
<feature type="transmembrane region" description="Helical; Name=4" evidence="2">
    <location>
        <begin position="200"/>
        <end position="220"/>
    </location>
</feature>
<feature type="transmembrane region" description="Helical; Name=5" evidence="2">
    <location>
        <begin position="241"/>
        <end position="261"/>
    </location>
</feature>
<feature type="transmembrane region" description="Helical; Name=6" evidence="2">
    <location>
        <begin position="297"/>
        <end position="317"/>
    </location>
</feature>
<feature type="repeat" description="Solcar 1">
    <location>
        <begin position="41"/>
        <end position="125"/>
    </location>
</feature>
<feature type="repeat" description="Solcar 2">
    <location>
        <begin position="138"/>
        <end position="222"/>
    </location>
</feature>
<feature type="repeat" description="Solcar 3">
    <location>
        <begin position="239"/>
        <end position="317"/>
    </location>
</feature>
<keyword id="KW-0472">Membrane</keyword>
<keyword id="KW-0496">Mitochondrion</keyword>
<keyword id="KW-0999">Mitochondrion inner membrane</keyword>
<keyword id="KW-1185">Reference proteome</keyword>
<keyword id="KW-0677">Repeat</keyword>
<keyword id="KW-0809">Transit peptide</keyword>
<keyword id="KW-0812">Transmembrane</keyword>
<keyword id="KW-1133">Transmembrane helix</keyword>
<keyword id="KW-0813">Transport</keyword>
<evidence type="ECO:0000250" key="1"/>
<evidence type="ECO:0000255" key="2"/>
<evidence type="ECO:0000305" key="3"/>
<comment type="function">
    <text evidence="1">Transport of phosphate groups from the cytosol to the mitochondrial matrix.</text>
</comment>
<comment type="subcellular location">
    <subcellularLocation>
        <location>Mitochondrion inner membrane</location>
        <topology>Multi-pass membrane protein</topology>
    </subcellularLocation>
</comment>
<comment type="similarity">
    <text evidence="3">Belongs to the mitochondrial carrier (TC 2.A.29) family.</text>
</comment>
<dbReference type="EMBL" id="X76113">
    <property type="protein sequence ID" value="CAA53719.1"/>
    <property type="molecule type" value="mRNA"/>
</dbReference>
<dbReference type="EMBL" id="Z68341">
    <property type="protein sequence ID" value="CAA92769.1"/>
    <property type="molecule type" value="Genomic_DNA"/>
</dbReference>
<dbReference type="EMBL" id="Z73103">
    <property type="protein sequence ID" value="CAA92769.1"/>
    <property type="status" value="JOINED"/>
    <property type="molecule type" value="Genomic_DNA"/>
</dbReference>
<dbReference type="PIR" id="T19105">
    <property type="entry name" value="T19105"/>
</dbReference>
<dbReference type="RefSeq" id="NP_001076672.1">
    <property type="nucleotide sequence ID" value="NM_001083203.6"/>
</dbReference>
<dbReference type="SMR" id="P40614"/>
<dbReference type="BioGRID" id="43119">
    <property type="interactions" value="19"/>
</dbReference>
<dbReference type="DIP" id="DIP-25979N"/>
<dbReference type="FunCoup" id="P40614">
    <property type="interactions" value="1959"/>
</dbReference>
<dbReference type="IntAct" id="P40614">
    <property type="interactions" value="1"/>
</dbReference>
<dbReference type="MINT" id="P40614"/>
<dbReference type="STRING" id="6239.F01G4.6b.1"/>
<dbReference type="PaxDb" id="6239-F01G4.6b.2"/>
<dbReference type="PeptideAtlas" id="P40614"/>
<dbReference type="EnsemblMetazoa" id="F01G4.6a.1">
    <property type="protein sequence ID" value="F01G4.6a.1"/>
    <property type="gene ID" value="WBGene00008505"/>
</dbReference>
<dbReference type="GeneID" id="178020"/>
<dbReference type="KEGG" id="cel:CELE_F01G4.6"/>
<dbReference type="UCSC" id="F01G4.6a.2">
    <property type="organism name" value="c. elegans"/>
</dbReference>
<dbReference type="AGR" id="WB:WBGene00008505"/>
<dbReference type="CTD" id="178020"/>
<dbReference type="WormBase" id="F01G4.6a">
    <property type="protein sequence ID" value="CE09162"/>
    <property type="gene ID" value="WBGene00008505"/>
</dbReference>
<dbReference type="eggNOG" id="KOG0767">
    <property type="taxonomic scope" value="Eukaryota"/>
</dbReference>
<dbReference type="GeneTree" id="ENSGT00970000196094"/>
<dbReference type="HOGENOM" id="CLU_039456_0_1_1"/>
<dbReference type="InParanoid" id="P40614"/>
<dbReference type="OrthoDB" id="427452at2759"/>
<dbReference type="PRO" id="PR:P40614"/>
<dbReference type="Proteomes" id="UP000001940">
    <property type="component" value="Chromosome IV"/>
</dbReference>
<dbReference type="Bgee" id="WBGene00008505">
    <property type="expression patterns" value="Expressed in larva and 4 other cell types or tissues"/>
</dbReference>
<dbReference type="ExpressionAtlas" id="P40614">
    <property type="expression patterns" value="baseline and differential"/>
</dbReference>
<dbReference type="GO" id="GO:0005743">
    <property type="term" value="C:mitochondrial inner membrane"/>
    <property type="evidence" value="ECO:0000318"/>
    <property type="project" value="GO_Central"/>
</dbReference>
<dbReference type="GO" id="GO:0005315">
    <property type="term" value="F:phosphate transmembrane transporter activity"/>
    <property type="evidence" value="ECO:0000318"/>
    <property type="project" value="GO_Central"/>
</dbReference>
<dbReference type="GO" id="GO:1990547">
    <property type="term" value="P:mitochondrial phosphate ion transmembrane transport"/>
    <property type="evidence" value="ECO:0007669"/>
    <property type="project" value="InterPro"/>
</dbReference>
<dbReference type="GO" id="GO:0035435">
    <property type="term" value="P:phosphate ion transmembrane transport"/>
    <property type="evidence" value="ECO:0000318"/>
    <property type="project" value="GO_Central"/>
</dbReference>
<dbReference type="FunFam" id="1.50.40.10:FF:000005">
    <property type="entry name" value="Mitochondrial phosphate carrier protein 2"/>
    <property type="match status" value="1"/>
</dbReference>
<dbReference type="Gene3D" id="1.50.40.10">
    <property type="entry name" value="Mitochondrial carrier domain"/>
    <property type="match status" value="1"/>
</dbReference>
<dbReference type="InterPro" id="IPR018108">
    <property type="entry name" value="Mitochondrial_sb/sol_carrier"/>
</dbReference>
<dbReference type="InterPro" id="IPR023395">
    <property type="entry name" value="Mt_carrier_dom_sf"/>
</dbReference>
<dbReference type="InterPro" id="IPR044677">
    <property type="entry name" value="SLC25A3/Pic2/Mir1-like"/>
</dbReference>
<dbReference type="PANTHER" id="PTHR45671">
    <property type="entry name" value="SOLUTE CARRIER FAMILY 25 (MITOCHONDRIAL CARRIER PHOSPHATE CARRIER), MEMBER 3, LIKE-RELATED-RELATED"/>
    <property type="match status" value="1"/>
</dbReference>
<dbReference type="PANTHER" id="PTHR45671:SF10">
    <property type="entry name" value="SOLUTE CARRIER FAMILY 25 MEMBER 3"/>
    <property type="match status" value="1"/>
</dbReference>
<dbReference type="Pfam" id="PF00153">
    <property type="entry name" value="Mito_carr"/>
    <property type="match status" value="3"/>
</dbReference>
<dbReference type="SUPFAM" id="SSF103506">
    <property type="entry name" value="Mitochondrial carrier"/>
    <property type="match status" value="1"/>
</dbReference>
<dbReference type="PROSITE" id="PS50920">
    <property type="entry name" value="SOLCAR"/>
    <property type="match status" value="3"/>
</dbReference>